<feature type="chain" id="PRO_1000013295" description="Large ribosomal subunit protein bL34">
    <location>
        <begin position="1"/>
        <end position="44"/>
    </location>
</feature>
<accession>Q0BAP9</accession>
<reference key="1">
    <citation type="submission" date="2006-08" db="EMBL/GenBank/DDBJ databases">
        <title>Complete sequence of chromosome 1 of Burkholderia cepacia AMMD.</title>
        <authorList>
            <person name="Copeland A."/>
            <person name="Lucas S."/>
            <person name="Lapidus A."/>
            <person name="Barry K."/>
            <person name="Detter J.C."/>
            <person name="Glavina del Rio T."/>
            <person name="Hammon N."/>
            <person name="Israni S."/>
            <person name="Pitluck S."/>
            <person name="Bruce D."/>
            <person name="Chain P."/>
            <person name="Malfatti S."/>
            <person name="Shin M."/>
            <person name="Vergez L."/>
            <person name="Schmutz J."/>
            <person name="Larimer F."/>
            <person name="Land M."/>
            <person name="Hauser L."/>
            <person name="Kyrpides N."/>
            <person name="Kim E."/>
            <person name="Parke J."/>
            <person name="Coenye T."/>
            <person name="Konstantinidis K."/>
            <person name="Ramette A."/>
            <person name="Tiedje J."/>
            <person name="Richardson P."/>
        </authorList>
    </citation>
    <scope>NUCLEOTIDE SEQUENCE [LARGE SCALE GENOMIC DNA]</scope>
    <source>
        <strain>ATCC BAA-244 / DSM 16087 / CCUG 44356 / LMG 19182 / AMMD</strain>
    </source>
</reference>
<protein>
    <recommendedName>
        <fullName evidence="1">Large ribosomal subunit protein bL34</fullName>
    </recommendedName>
    <alternativeName>
        <fullName evidence="2">50S ribosomal protein L34</fullName>
    </alternativeName>
</protein>
<proteinExistence type="inferred from homology"/>
<gene>
    <name evidence="1" type="primary">rpmH</name>
    <name type="ordered locus">Bamb_3218</name>
</gene>
<keyword id="KW-0687">Ribonucleoprotein</keyword>
<keyword id="KW-0689">Ribosomal protein</keyword>
<evidence type="ECO:0000255" key="1">
    <source>
        <dbReference type="HAMAP-Rule" id="MF_00391"/>
    </source>
</evidence>
<evidence type="ECO:0000305" key="2"/>
<dbReference type="EMBL" id="CP000440">
    <property type="protein sequence ID" value="ABI88774.1"/>
    <property type="molecule type" value="Genomic_DNA"/>
</dbReference>
<dbReference type="RefSeq" id="WP_004198824.1">
    <property type="nucleotide sequence ID" value="NZ_CP009798.1"/>
</dbReference>
<dbReference type="SMR" id="Q0BAP9"/>
<dbReference type="GeneID" id="98107775"/>
<dbReference type="KEGG" id="bam:Bamb_3218"/>
<dbReference type="PATRIC" id="fig|339670.21.peg.1639"/>
<dbReference type="eggNOG" id="COG0230">
    <property type="taxonomic scope" value="Bacteria"/>
</dbReference>
<dbReference type="Proteomes" id="UP000000662">
    <property type="component" value="Chromosome 1"/>
</dbReference>
<dbReference type="GO" id="GO:1990904">
    <property type="term" value="C:ribonucleoprotein complex"/>
    <property type="evidence" value="ECO:0007669"/>
    <property type="project" value="UniProtKB-KW"/>
</dbReference>
<dbReference type="GO" id="GO:0005840">
    <property type="term" value="C:ribosome"/>
    <property type="evidence" value="ECO:0007669"/>
    <property type="project" value="UniProtKB-KW"/>
</dbReference>
<dbReference type="GO" id="GO:0003735">
    <property type="term" value="F:structural constituent of ribosome"/>
    <property type="evidence" value="ECO:0007669"/>
    <property type="project" value="InterPro"/>
</dbReference>
<dbReference type="GO" id="GO:0006412">
    <property type="term" value="P:translation"/>
    <property type="evidence" value="ECO:0007669"/>
    <property type="project" value="UniProtKB-UniRule"/>
</dbReference>
<dbReference type="FunFam" id="1.10.287.3980:FF:000001">
    <property type="entry name" value="Mitochondrial ribosomal protein L34"/>
    <property type="match status" value="1"/>
</dbReference>
<dbReference type="Gene3D" id="1.10.287.3980">
    <property type="match status" value="1"/>
</dbReference>
<dbReference type="HAMAP" id="MF_00391">
    <property type="entry name" value="Ribosomal_bL34"/>
    <property type="match status" value="1"/>
</dbReference>
<dbReference type="InterPro" id="IPR000271">
    <property type="entry name" value="Ribosomal_bL34"/>
</dbReference>
<dbReference type="InterPro" id="IPR020939">
    <property type="entry name" value="Ribosomal_bL34_CS"/>
</dbReference>
<dbReference type="NCBIfam" id="TIGR01030">
    <property type="entry name" value="rpmH_bact"/>
    <property type="match status" value="1"/>
</dbReference>
<dbReference type="PANTHER" id="PTHR14503:SF4">
    <property type="entry name" value="LARGE RIBOSOMAL SUBUNIT PROTEIN BL34M"/>
    <property type="match status" value="1"/>
</dbReference>
<dbReference type="PANTHER" id="PTHR14503">
    <property type="entry name" value="MITOCHONDRIAL RIBOSOMAL PROTEIN 34 FAMILY MEMBER"/>
    <property type="match status" value="1"/>
</dbReference>
<dbReference type="Pfam" id="PF00468">
    <property type="entry name" value="Ribosomal_L34"/>
    <property type="match status" value="1"/>
</dbReference>
<dbReference type="PROSITE" id="PS00784">
    <property type="entry name" value="RIBOSOMAL_L34"/>
    <property type="match status" value="1"/>
</dbReference>
<organism>
    <name type="scientific">Burkholderia ambifaria (strain ATCC BAA-244 / DSM 16087 / CCUG 44356 / LMG 19182 / AMMD)</name>
    <name type="common">Burkholderia cepacia (strain AMMD)</name>
    <dbReference type="NCBI Taxonomy" id="339670"/>
    <lineage>
        <taxon>Bacteria</taxon>
        <taxon>Pseudomonadati</taxon>
        <taxon>Pseudomonadota</taxon>
        <taxon>Betaproteobacteria</taxon>
        <taxon>Burkholderiales</taxon>
        <taxon>Burkholderiaceae</taxon>
        <taxon>Burkholderia</taxon>
        <taxon>Burkholderia cepacia complex</taxon>
    </lineage>
</organism>
<sequence length="44" mass="5195">MKRTYQPSVTRRKRTHGFRVRMKTAGGRKVINARRAKGRKRLAI</sequence>
<name>RL34_BURCM</name>
<comment type="similarity">
    <text evidence="1">Belongs to the bacterial ribosomal protein bL34 family.</text>
</comment>